<evidence type="ECO:0000255" key="1">
    <source>
        <dbReference type="HAMAP-Rule" id="MF_01511"/>
    </source>
</evidence>
<evidence type="ECO:0000305" key="2"/>
<accession>Q1JLQ8</accession>
<reference key="1">
    <citation type="journal article" date="2006" name="Proc. Natl. Acad. Sci. U.S.A.">
        <title>Molecular genetic anatomy of inter- and intraserotype variation in the human bacterial pathogen group A Streptococcus.</title>
        <authorList>
            <person name="Beres S.B."/>
            <person name="Richter E.W."/>
            <person name="Nagiec M.J."/>
            <person name="Sumby P."/>
            <person name="Porcella S.F."/>
            <person name="DeLeo F.R."/>
            <person name="Musser J.M."/>
        </authorList>
    </citation>
    <scope>NUCLEOTIDE SEQUENCE [LARGE SCALE GENOMIC DNA]</scope>
    <source>
        <strain>MGAS9429</strain>
    </source>
</reference>
<organism>
    <name type="scientific">Streptococcus pyogenes serotype M12 (strain MGAS9429)</name>
    <dbReference type="NCBI Taxonomy" id="370551"/>
    <lineage>
        <taxon>Bacteria</taxon>
        <taxon>Bacillati</taxon>
        <taxon>Bacillota</taxon>
        <taxon>Bacilli</taxon>
        <taxon>Lactobacillales</taxon>
        <taxon>Streptococcaceae</taxon>
        <taxon>Streptococcus</taxon>
    </lineage>
</organism>
<dbReference type="EC" id="1.7.1.7" evidence="1"/>
<dbReference type="EMBL" id="CP000259">
    <property type="protein sequence ID" value="ABF32161.1"/>
    <property type="status" value="ALT_INIT"/>
    <property type="molecule type" value="Genomic_DNA"/>
</dbReference>
<dbReference type="RefSeq" id="WP_002989808.1">
    <property type="nucleotide sequence ID" value="NC_008021.1"/>
</dbReference>
<dbReference type="SMR" id="Q1JLQ8"/>
<dbReference type="KEGG" id="spk:MGAS9429_Spy0974"/>
<dbReference type="HOGENOM" id="CLU_022552_5_0_9"/>
<dbReference type="Proteomes" id="UP000002433">
    <property type="component" value="Chromosome"/>
</dbReference>
<dbReference type="GO" id="GO:0005829">
    <property type="term" value="C:cytosol"/>
    <property type="evidence" value="ECO:0007669"/>
    <property type="project" value="TreeGrafter"/>
</dbReference>
<dbReference type="GO" id="GO:1902560">
    <property type="term" value="C:GMP reductase complex"/>
    <property type="evidence" value="ECO:0007669"/>
    <property type="project" value="InterPro"/>
</dbReference>
<dbReference type="GO" id="GO:0003920">
    <property type="term" value="F:GMP reductase activity"/>
    <property type="evidence" value="ECO:0007669"/>
    <property type="project" value="UniProtKB-UniRule"/>
</dbReference>
<dbReference type="GO" id="GO:0006163">
    <property type="term" value="P:purine nucleotide metabolic process"/>
    <property type="evidence" value="ECO:0007669"/>
    <property type="project" value="UniProtKB-UniRule"/>
</dbReference>
<dbReference type="CDD" id="cd00381">
    <property type="entry name" value="IMPDH"/>
    <property type="match status" value="1"/>
</dbReference>
<dbReference type="FunFam" id="3.20.20.70:FF:000424">
    <property type="entry name" value="Inosine-5'-monophosphate dehydrogenase 2"/>
    <property type="match status" value="1"/>
</dbReference>
<dbReference type="Gene3D" id="3.20.20.70">
    <property type="entry name" value="Aldolase class I"/>
    <property type="match status" value="1"/>
</dbReference>
<dbReference type="HAMAP" id="MF_01511">
    <property type="entry name" value="GMP_reduct_type2"/>
    <property type="match status" value="1"/>
</dbReference>
<dbReference type="InterPro" id="IPR013785">
    <property type="entry name" value="Aldolase_TIM"/>
</dbReference>
<dbReference type="InterPro" id="IPR050139">
    <property type="entry name" value="GMP_reductase"/>
</dbReference>
<dbReference type="InterPro" id="IPR005994">
    <property type="entry name" value="GuaC_type_2"/>
</dbReference>
<dbReference type="InterPro" id="IPR015875">
    <property type="entry name" value="IMP_DH/GMP_Rdtase_CS"/>
</dbReference>
<dbReference type="InterPro" id="IPR001093">
    <property type="entry name" value="IMP_DH_GMPRt"/>
</dbReference>
<dbReference type="NCBIfam" id="TIGR01306">
    <property type="entry name" value="GMP_reduct_2"/>
    <property type="match status" value="1"/>
</dbReference>
<dbReference type="NCBIfam" id="NF003966">
    <property type="entry name" value="PRK05458.1"/>
    <property type="match status" value="1"/>
</dbReference>
<dbReference type="PANTHER" id="PTHR43170">
    <property type="entry name" value="GMP REDUCTASE"/>
    <property type="match status" value="1"/>
</dbReference>
<dbReference type="PANTHER" id="PTHR43170:SF5">
    <property type="entry name" value="GMP REDUCTASE"/>
    <property type="match status" value="1"/>
</dbReference>
<dbReference type="Pfam" id="PF00478">
    <property type="entry name" value="IMPDH"/>
    <property type="match status" value="1"/>
</dbReference>
<dbReference type="PIRSF" id="PIRSF036500">
    <property type="entry name" value="GMP_red_Firmic"/>
    <property type="match status" value="1"/>
</dbReference>
<dbReference type="SMART" id="SM01240">
    <property type="entry name" value="IMPDH"/>
    <property type="match status" value="1"/>
</dbReference>
<dbReference type="SUPFAM" id="SSF51412">
    <property type="entry name" value="Inosine monophosphate dehydrogenase (IMPDH)"/>
    <property type="match status" value="1"/>
</dbReference>
<dbReference type="PROSITE" id="PS00487">
    <property type="entry name" value="IMP_DH_GMP_RED"/>
    <property type="match status" value="1"/>
</dbReference>
<sequence length="327" mass="35960">MFNDIPVFDYEDIQLIPNKCIITSRSQADTSVTLGKYQFKLPVIPANMQTIIDETIAEQLAKEGYFYIMHRFDEDSRKPFIKRMHEQGLIASISVGVKAYEYEFVTSLKEDTPEFITIDIAHGHANSVIDMIKHIKTELPETFVIAGNVGTPEAVRELENAGADATKVGIGPGKVCITKVKTGFGTGGWQLAALRWCAKAARKPIIADGGIRTHGDIAKSIRFGASMVMIGSLFAGHIESPGKTVEVNGETFKEYYGSASAYQKGEHKNVEGKKILLPTKGHLSDTLTEMQQDLQSSISYAGGKDLDSLRHVDYVIVKNSIWNGDSI</sequence>
<comment type="function">
    <text evidence="1">Catalyzes the irreversible NADPH-dependent deamination of GMP to IMP. It functions in the conversion of nucleobase, nucleoside and nucleotide derivatives of G to A nucleotides, and in maintaining the intracellular balance of A and G nucleotides.</text>
</comment>
<comment type="catalytic activity">
    <reaction evidence="1">
        <text>IMP + NH4(+) + NADP(+) = GMP + NADPH + 2 H(+)</text>
        <dbReference type="Rhea" id="RHEA:17185"/>
        <dbReference type="ChEBI" id="CHEBI:15378"/>
        <dbReference type="ChEBI" id="CHEBI:28938"/>
        <dbReference type="ChEBI" id="CHEBI:57783"/>
        <dbReference type="ChEBI" id="CHEBI:58053"/>
        <dbReference type="ChEBI" id="CHEBI:58115"/>
        <dbReference type="ChEBI" id="CHEBI:58349"/>
        <dbReference type="EC" id="1.7.1.7"/>
    </reaction>
</comment>
<comment type="similarity">
    <text evidence="1">Belongs to the IMPDH/GMPR family. GuaC type 2 subfamily.</text>
</comment>
<comment type="sequence caution" evidence="2">
    <conflict type="erroneous initiation">
        <sequence resource="EMBL-CDS" id="ABF32161"/>
    </conflict>
</comment>
<feature type="chain" id="PRO_0000292056" description="GMP reductase">
    <location>
        <begin position="1"/>
        <end position="327"/>
    </location>
</feature>
<feature type="active site" description="Thioimidate intermediate" evidence="1">
    <location>
        <position position="176"/>
    </location>
</feature>
<feature type="binding site" evidence="1">
    <location>
        <begin position="205"/>
        <end position="228"/>
    </location>
    <ligand>
        <name>NADP(+)</name>
        <dbReference type="ChEBI" id="CHEBI:58349"/>
    </ligand>
</feature>
<name>GUAC_STRPC</name>
<proteinExistence type="inferred from homology"/>
<gene>
    <name evidence="1" type="primary">guaC</name>
    <name type="ordered locus">MGAS9429_Spy0974</name>
</gene>
<protein>
    <recommendedName>
        <fullName evidence="1">GMP reductase</fullName>
        <ecNumber evidence="1">1.7.1.7</ecNumber>
    </recommendedName>
    <alternativeName>
        <fullName evidence="1">Guanosine 5'-monophosphate oxidoreductase</fullName>
        <shortName evidence="1">Guanosine monophosphate reductase</shortName>
    </alternativeName>
</protein>
<keyword id="KW-0521">NADP</keyword>
<keyword id="KW-0560">Oxidoreductase</keyword>